<keyword id="KW-1185">Reference proteome</keyword>
<keyword id="KW-0804">Transcription</keyword>
<keyword id="KW-0889">Transcription antitermination</keyword>
<keyword id="KW-0805">Transcription regulation</keyword>
<keyword id="KW-0806">Transcription termination</keyword>
<feature type="initiator methionine" description="Removed" evidence="1">
    <location>
        <position position="1"/>
    </location>
</feature>
<feature type="chain" id="PRO_0000113973" description="Transcription termination/antitermination protein NusG">
    <location>
        <begin position="2"/>
        <end position="181"/>
    </location>
</feature>
<feature type="domain" description="KOW" evidence="2">
    <location>
        <begin position="130"/>
        <end position="161"/>
    </location>
</feature>
<accession>Q8ZAP0</accession>
<accession>Q0WAQ6</accession>
<proteinExistence type="inferred from homology"/>
<name>NUSG_YERPE</name>
<reference key="1">
    <citation type="journal article" date="2001" name="Nature">
        <title>Genome sequence of Yersinia pestis, the causative agent of plague.</title>
        <authorList>
            <person name="Parkhill J."/>
            <person name="Wren B.W."/>
            <person name="Thomson N.R."/>
            <person name="Titball R.W."/>
            <person name="Holden M.T.G."/>
            <person name="Prentice M.B."/>
            <person name="Sebaihia M."/>
            <person name="James K.D."/>
            <person name="Churcher C.M."/>
            <person name="Mungall K.L."/>
            <person name="Baker S."/>
            <person name="Basham D."/>
            <person name="Bentley S.D."/>
            <person name="Brooks K."/>
            <person name="Cerdeno-Tarraga A.-M."/>
            <person name="Chillingworth T."/>
            <person name="Cronin A."/>
            <person name="Davies R.M."/>
            <person name="Davis P."/>
            <person name="Dougan G."/>
            <person name="Feltwell T."/>
            <person name="Hamlin N."/>
            <person name="Holroyd S."/>
            <person name="Jagels K."/>
            <person name="Karlyshev A.V."/>
            <person name="Leather S."/>
            <person name="Moule S."/>
            <person name="Oyston P.C.F."/>
            <person name="Quail M.A."/>
            <person name="Rutherford K.M."/>
            <person name="Simmonds M."/>
            <person name="Skelton J."/>
            <person name="Stevens K."/>
            <person name="Whitehead S."/>
            <person name="Barrell B.G."/>
        </authorList>
    </citation>
    <scope>NUCLEOTIDE SEQUENCE [LARGE SCALE GENOMIC DNA]</scope>
    <source>
        <strain>CO-92 / Biovar Orientalis</strain>
    </source>
</reference>
<reference key="2">
    <citation type="journal article" date="2002" name="J. Bacteriol.">
        <title>Genome sequence of Yersinia pestis KIM.</title>
        <authorList>
            <person name="Deng W."/>
            <person name="Burland V."/>
            <person name="Plunkett G. III"/>
            <person name="Boutin A."/>
            <person name="Mayhew G.F."/>
            <person name="Liss P."/>
            <person name="Perna N.T."/>
            <person name="Rose D.J."/>
            <person name="Mau B."/>
            <person name="Zhou S."/>
            <person name="Schwartz D.C."/>
            <person name="Fetherston J.D."/>
            <person name="Lindler L.E."/>
            <person name="Brubaker R.R."/>
            <person name="Plano G.V."/>
            <person name="Straley S.C."/>
            <person name="McDonough K.A."/>
            <person name="Nilles M.L."/>
            <person name="Matson J.S."/>
            <person name="Blattner F.R."/>
            <person name="Perry R.D."/>
        </authorList>
    </citation>
    <scope>NUCLEOTIDE SEQUENCE [LARGE SCALE GENOMIC DNA]</scope>
    <source>
        <strain>KIM10+ / Biovar Mediaevalis</strain>
    </source>
</reference>
<reference key="3">
    <citation type="journal article" date="2004" name="DNA Res.">
        <title>Complete genome sequence of Yersinia pestis strain 91001, an isolate avirulent to humans.</title>
        <authorList>
            <person name="Song Y."/>
            <person name="Tong Z."/>
            <person name="Wang J."/>
            <person name="Wang L."/>
            <person name="Guo Z."/>
            <person name="Han Y."/>
            <person name="Zhang J."/>
            <person name="Pei D."/>
            <person name="Zhou D."/>
            <person name="Qin H."/>
            <person name="Pang X."/>
            <person name="Han Y."/>
            <person name="Zhai J."/>
            <person name="Li M."/>
            <person name="Cui B."/>
            <person name="Qi Z."/>
            <person name="Jin L."/>
            <person name="Dai R."/>
            <person name="Chen F."/>
            <person name="Li S."/>
            <person name="Ye C."/>
            <person name="Du Z."/>
            <person name="Lin W."/>
            <person name="Wang J."/>
            <person name="Yu J."/>
            <person name="Yang H."/>
            <person name="Wang J."/>
            <person name="Huang P."/>
            <person name="Yang R."/>
        </authorList>
    </citation>
    <scope>NUCLEOTIDE SEQUENCE [LARGE SCALE GENOMIC DNA]</scope>
    <source>
        <strain>91001 / Biovar Mediaevalis</strain>
    </source>
</reference>
<sequence>MSEAPKKRWYVVQAFSGFEGRVAQSLREHIKLHDMEELFGEVMVPTEEVVEIRGGQRRKSERKFFPGYVLVQMVMNDASWHLVRSVPRVMGFIGGTSDRPAPISDKEVDAIMNRLQQVGDKPRPKTLFEPGELVRVSDGPFADFNGVVEEVDYEKSRLKVSVSIFGRATPVELDFSQVEKG</sequence>
<evidence type="ECO:0000250" key="1"/>
<evidence type="ECO:0000255" key="2">
    <source>
        <dbReference type="HAMAP-Rule" id="MF_00948"/>
    </source>
</evidence>
<protein>
    <recommendedName>
        <fullName evidence="2">Transcription termination/antitermination protein NusG</fullName>
    </recommendedName>
</protein>
<comment type="function">
    <text evidence="2">Participates in transcription elongation, termination and antitermination. In the absence of Rho, increases the rate of transcription elongation by the RNA polymerase (RNAP), probably by partially suppressing pausing. In the presence of Rho, modulates most Rho-dependent termination events by interacting with the RNAP to render the complex more susceptible to the termination activity of Rho. May be required to overcome a kinetic limitation of Rho to function at certain terminators. Also involved in ribosomal RNA transcriptional antitermination.</text>
</comment>
<comment type="subunit">
    <text evidence="2">Monomer. Interacts with the transcription termination factor Rho and with RNA polymerase.</text>
</comment>
<comment type="similarity">
    <text evidence="2">Belongs to the NusG family.</text>
</comment>
<dbReference type="EMBL" id="AL590842">
    <property type="protein sequence ID" value="CAL22339.1"/>
    <property type="molecule type" value="Genomic_DNA"/>
</dbReference>
<dbReference type="EMBL" id="AE009952">
    <property type="protein sequence ID" value="AAM84068.1"/>
    <property type="molecule type" value="Genomic_DNA"/>
</dbReference>
<dbReference type="EMBL" id="AE017042">
    <property type="protein sequence ID" value="AAS63285.1"/>
    <property type="molecule type" value="Genomic_DNA"/>
</dbReference>
<dbReference type="PIR" id="AH0456">
    <property type="entry name" value="AH0456"/>
</dbReference>
<dbReference type="RefSeq" id="WP_002210671.1">
    <property type="nucleotide sequence ID" value="NZ_WUCM01000099.1"/>
</dbReference>
<dbReference type="RefSeq" id="YP_002348632.1">
    <property type="nucleotide sequence ID" value="NC_003143.1"/>
</dbReference>
<dbReference type="SMR" id="Q8ZAP0"/>
<dbReference type="STRING" id="214092.YPO3752"/>
<dbReference type="PaxDb" id="214092-YPO3752"/>
<dbReference type="DNASU" id="1145426"/>
<dbReference type="EnsemblBacteria" id="AAS63285">
    <property type="protein sequence ID" value="AAS63285"/>
    <property type="gene ID" value="YP_3115"/>
</dbReference>
<dbReference type="GeneID" id="97458063"/>
<dbReference type="KEGG" id="ype:YPO3752"/>
<dbReference type="KEGG" id="ypk:y0479"/>
<dbReference type="KEGG" id="ypm:YP_3115"/>
<dbReference type="PATRIC" id="fig|214092.21.peg.4270"/>
<dbReference type="eggNOG" id="COG0250">
    <property type="taxonomic scope" value="Bacteria"/>
</dbReference>
<dbReference type="HOGENOM" id="CLU_067287_1_0_6"/>
<dbReference type="OMA" id="EWYVIHT"/>
<dbReference type="OrthoDB" id="9809075at2"/>
<dbReference type="Proteomes" id="UP000000815">
    <property type="component" value="Chromosome"/>
</dbReference>
<dbReference type="Proteomes" id="UP000001019">
    <property type="component" value="Chromosome"/>
</dbReference>
<dbReference type="Proteomes" id="UP000002490">
    <property type="component" value="Chromosome"/>
</dbReference>
<dbReference type="GO" id="GO:0005829">
    <property type="term" value="C:cytosol"/>
    <property type="evidence" value="ECO:0000318"/>
    <property type="project" value="GO_Central"/>
</dbReference>
<dbReference type="GO" id="GO:0006353">
    <property type="term" value="P:DNA-templated transcription termination"/>
    <property type="evidence" value="ECO:0007669"/>
    <property type="project" value="UniProtKB-UniRule"/>
</dbReference>
<dbReference type="GO" id="GO:0032784">
    <property type="term" value="P:regulation of DNA-templated transcription elongation"/>
    <property type="evidence" value="ECO:0007669"/>
    <property type="project" value="InterPro"/>
</dbReference>
<dbReference type="GO" id="GO:0031564">
    <property type="term" value="P:transcription antitermination"/>
    <property type="evidence" value="ECO:0007669"/>
    <property type="project" value="UniProtKB-UniRule"/>
</dbReference>
<dbReference type="GO" id="GO:0140673">
    <property type="term" value="P:transcription elongation-coupled chromatin remodeling"/>
    <property type="evidence" value="ECO:0007669"/>
    <property type="project" value="InterPro"/>
</dbReference>
<dbReference type="CDD" id="cd06091">
    <property type="entry name" value="KOW_NusG"/>
    <property type="match status" value="1"/>
</dbReference>
<dbReference type="CDD" id="cd09891">
    <property type="entry name" value="NGN_Bact_1"/>
    <property type="match status" value="1"/>
</dbReference>
<dbReference type="FunFam" id="2.30.30.30:FF:000002">
    <property type="entry name" value="Transcription termination/antitermination factor NusG"/>
    <property type="match status" value="1"/>
</dbReference>
<dbReference type="FunFam" id="3.30.70.940:FF:000001">
    <property type="entry name" value="Transcription termination/antitermination protein NusG"/>
    <property type="match status" value="1"/>
</dbReference>
<dbReference type="Gene3D" id="2.30.30.30">
    <property type="match status" value="1"/>
</dbReference>
<dbReference type="Gene3D" id="3.30.70.940">
    <property type="entry name" value="NusG, N-terminal domain"/>
    <property type="match status" value="1"/>
</dbReference>
<dbReference type="HAMAP" id="MF_00948">
    <property type="entry name" value="NusG"/>
    <property type="match status" value="1"/>
</dbReference>
<dbReference type="InterPro" id="IPR005824">
    <property type="entry name" value="KOW"/>
</dbReference>
<dbReference type="InterPro" id="IPR047050">
    <property type="entry name" value="NGN"/>
</dbReference>
<dbReference type="InterPro" id="IPR006645">
    <property type="entry name" value="NGN-like_dom"/>
</dbReference>
<dbReference type="InterPro" id="IPR036735">
    <property type="entry name" value="NGN_dom_sf"/>
</dbReference>
<dbReference type="InterPro" id="IPR043425">
    <property type="entry name" value="NusG-like"/>
</dbReference>
<dbReference type="InterPro" id="IPR014722">
    <property type="entry name" value="Rib_uL2_dom2"/>
</dbReference>
<dbReference type="InterPro" id="IPR001062">
    <property type="entry name" value="Transcrpt_antiterm_NusG"/>
</dbReference>
<dbReference type="InterPro" id="IPR015869">
    <property type="entry name" value="Transcrpt_antiterm_NusG_bac_CS"/>
</dbReference>
<dbReference type="InterPro" id="IPR008991">
    <property type="entry name" value="Translation_prot_SH3-like_sf"/>
</dbReference>
<dbReference type="NCBIfam" id="TIGR00922">
    <property type="entry name" value="nusG"/>
    <property type="match status" value="1"/>
</dbReference>
<dbReference type="PANTHER" id="PTHR30265">
    <property type="entry name" value="RHO-INTERACTING TRANSCRIPTION TERMINATION FACTOR NUSG"/>
    <property type="match status" value="1"/>
</dbReference>
<dbReference type="PANTHER" id="PTHR30265:SF2">
    <property type="entry name" value="TRANSCRIPTION TERMINATION_ANTITERMINATION PROTEIN NUSG"/>
    <property type="match status" value="1"/>
</dbReference>
<dbReference type="Pfam" id="PF00467">
    <property type="entry name" value="KOW"/>
    <property type="match status" value="1"/>
</dbReference>
<dbReference type="Pfam" id="PF02357">
    <property type="entry name" value="NusG"/>
    <property type="match status" value="1"/>
</dbReference>
<dbReference type="PRINTS" id="PR00338">
    <property type="entry name" value="NUSGTNSCPFCT"/>
</dbReference>
<dbReference type="SMART" id="SM00739">
    <property type="entry name" value="KOW"/>
    <property type="match status" value="1"/>
</dbReference>
<dbReference type="SMART" id="SM00738">
    <property type="entry name" value="NGN"/>
    <property type="match status" value="1"/>
</dbReference>
<dbReference type="SUPFAM" id="SSF82679">
    <property type="entry name" value="N-utilization substance G protein NusG, N-terminal domain"/>
    <property type="match status" value="1"/>
</dbReference>
<dbReference type="SUPFAM" id="SSF50104">
    <property type="entry name" value="Translation proteins SH3-like domain"/>
    <property type="match status" value="1"/>
</dbReference>
<dbReference type="PROSITE" id="PS01014">
    <property type="entry name" value="NUSG"/>
    <property type="match status" value="1"/>
</dbReference>
<gene>
    <name evidence="2" type="primary">nusG</name>
    <name type="ordered locus">YPO3752</name>
    <name type="ordered locus">y0479</name>
    <name type="ordered locus">YP_3115</name>
</gene>
<organism>
    <name type="scientific">Yersinia pestis</name>
    <dbReference type="NCBI Taxonomy" id="632"/>
    <lineage>
        <taxon>Bacteria</taxon>
        <taxon>Pseudomonadati</taxon>
        <taxon>Pseudomonadota</taxon>
        <taxon>Gammaproteobacteria</taxon>
        <taxon>Enterobacterales</taxon>
        <taxon>Yersiniaceae</taxon>
        <taxon>Yersinia</taxon>
    </lineage>
</organism>